<name>RL14_THEPX</name>
<sequence>MIQPQTRLKVADNTGAKEIMCIRLEGGSNRKFSNVGDVIVASVKSATPGGVVKKGEVVKAVIVRTKKGIARKDGTYIRFDDNAAVIIRDDKQPRGTRIFGPVARELREKDFMKIISLAPEVL</sequence>
<evidence type="ECO:0000255" key="1">
    <source>
        <dbReference type="HAMAP-Rule" id="MF_01367"/>
    </source>
</evidence>
<evidence type="ECO:0000305" key="2"/>
<protein>
    <recommendedName>
        <fullName evidence="1">Large ribosomal subunit protein uL14</fullName>
    </recommendedName>
    <alternativeName>
        <fullName evidence="2">50S ribosomal protein L14</fullName>
    </alternativeName>
</protein>
<proteinExistence type="inferred from homology"/>
<feature type="chain" id="PRO_1000144343" description="Large ribosomal subunit protein uL14">
    <location>
        <begin position="1"/>
        <end position="122"/>
    </location>
</feature>
<reference key="1">
    <citation type="submission" date="2008-01" db="EMBL/GenBank/DDBJ databases">
        <title>Complete sequence of Thermoanaerobacter sp. X514.</title>
        <authorList>
            <consortium name="US DOE Joint Genome Institute"/>
            <person name="Copeland A."/>
            <person name="Lucas S."/>
            <person name="Lapidus A."/>
            <person name="Barry K."/>
            <person name="Glavina del Rio T."/>
            <person name="Dalin E."/>
            <person name="Tice H."/>
            <person name="Pitluck S."/>
            <person name="Bruce D."/>
            <person name="Goodwin L."/>
            <person name="Saunders E."/>
            <person name="Brettin T."/>
            <person name="Detter J.C."/>
            <person name="Han C."/>
            <person name="Schmutz J."/>
            <person name="Larimer F."/>
            <person name="Land M."/>
            <person name="Hauser L."/>
            <person name="Kyrpides N."/>
            <person name="Kim E."/>
            <person name="Hemme C."/>
            <person name="Fields M.W."/>
            <person name="He Z."/>
            <person name="Zhou J."/>
            <person name="Richardson P."/>
        </authorList>
    </citation>
    <scope>NUCLEOTIDE SEQUENCE [LARGE SCALE GENOMIC DNA]</scope>
    <source>
        <strain>X514</strain>
    </source>
</reference>
<keyword id="KW-0687">Ribonucleoprotein</keyword>
<keyword id="KW-0689">Ribosomal protein</keyword>
<keyword id="KW-0694">RNA-binding</keyword>
<keyword id="KW-0699">rRNA-binding</keyword>
<organism>
    <name type="scientific">Thermoanaerobacter sp. (strain X514)</name>
    <dbReference type="NCBI Taxonomy" id="399726"/>
    <lineage>
        <taxon>Bacteria</taxon>
        <taxon>Bacillati</taxon>
        <taxon>Bacillota</taxon>
        <taxon>Clostridia</taxon>
        <taxon>Thermoanaerobacterales</taxon>
        <taxon>Thermoanaerobacteraceae</taxon>
        <taxon>Thermoanaerobacter</taxon>
    </lineage>
</organism>
<accession>B0K5Q3</accession>
<gene>
    <name evidence="1" type="primary">rplN</name>
    <name type="ordered locus">Teth514_0877</name>
</gene>
<comment type="function">
    <text evidence="1">Binds to 23S rRNA. Forms part of two intersubunit bridges in the 70S ribosome.</text>
</comment>
<comment type="subunit">
    <text evidence="1">Part of the 50S ribosomal subunit. Forms a cluster with proteins L3 and L19. In the 70S ribosome, L14 and L19 interact and together make contacts with the 16S rRNA in bridges B5 and B8.</text>
</comment>
<comment type="similarity">
    <text evidence="1">Belongs to the universal ribosomal protein uL14 family.</text>
</comment>
<dbReference type="EMBL" id="CP000923">
    <property type="protein sequence ID" value="ABY92179.1"/>
    <property type="molecule type" value="Genomic_DNA"/>
</dbReference>
<dbReference type="RefSeq" id="WP_003868570.1">
    <property type="nucleotide sequence ID" value="NC_010320.1"/>
</dbReference>
<dbReference type="SMR" id="B0K5Q3"/>
<dbReference type="KEGG" id="tex:Teth514_0877"/>
<dbReference type="HOGENOM" id="CLU_095071_2_1_9"/>
<dbReference type="Proteomes" id="UP000002155">
    <property type="component" value="Chromosome"/>
</dbReference>
<dbReference type="GO" id="GO:0022625">
    <property type="term" value="C:cytosolic large ribosomal subunit"/>
    <property type="evidence" value="ECO:0007669"/>
    <property type="project" value="TreeGrafter"/>
</dbReference>
<dbReference type="GO" id="GO:0070180">
    <property type="term" value="F:large ribosomal subunit rRNA binding"/>
    <property type="evidence" value="ECO:0007669"/>
    <property type="project" value="TreeGrafter"/>
</dbReference>
<dbReference type="GO" id="GO:0003735">
    <property type="term" value="F:structural constituent of ribosome"/>
    <property type="evidence" value="ECO:0007669"/>
    <property type="project" value="InterPro"/>
</dbReference>
<dbReference type="GO" id="GO:0006412">
    <property type="term" value="P:translation"/>
    <property type="evidence" value="ECO:0007669"/>
    <property type="project" value="UniProtKB-UniRule"/>
</dbReference>
<dbReference type="CDD" id="cd00337">
    <property type="entry name" value="Ribosomal_uL14"/>
    <property type="match status" value="1"/>
</dbReference>
<dbReference type="FunFam" id="2.40.150.20:FF:000001">
    <property type="entry name" value="50S ribosomal protein L14"/>
    <property type="match status" value="1"/>
</dbReference>
<dbReference type="Gene3D" id="2.40.150.20">
    <property type="entry name" value="Ribosomal protein L14"/>
    <property type="match status" value="1"/>
</dbReference>
<dbReference type="HAMAP" id="MF_01367">
    <property type="entry name" value="Ribosomal_uL14"/>
    <property type="match status" value="1"/>
</dbReference>
<dbReference type="InterPro" id="IPR000218">
    <property type="entry name" value="Ribosomal_uL14"/>
</dbReference>
<dbReference type="InterPro" id="IPR005745">
    <property type="entry name" value="Ribosomal_uL14_bac-type"/>
</dbReference>
<dbReference type="InterPro" id="IPR019972">
    <property type="entry name" value="Ribosomal_uL14_CS"/>
</dbReference>
<dbReference type="InterPro" id="IPR036853">
    <property type="entry name" value="Ribosomal_uL14_sf"/>
</dbReference>
<dbReference type="NCBIfam" id="TIGR01067">
    <property type="entry name" value="rplN_bact"/>
    <property type="match status" value="1"/>
</dbReference>
<dbReference type="PANTHER" id="PTHR11761">
    <property type="entry name" value="50S/60S RIBOSOMAL PROTEIN L14/L23"/>
    <property type="match status" value="1"/>
</dbReference>
<dbReference type="PANTHER" id="PTHR11761:SF3">
    <property type="entry name" value="LARGE RIBOSOMAL SUBUNIT PROTEIN UL14M"/>
    <property type="match status" value="1"/>
</dbReference>
<dbReference type="Pfam" id="PF00238">
    <property type="entry name" value="Ribosomal_L14"/>
    <property type="match status" value="1"/>
</dbReference>
<dbReference type="SMART" id="SM01374">
    <property type="entry name" value="Ribosomal_L14"/>
    <property type="match status" value="1"/>
</dbReference>
<dbReference type="SUPFAM" id="SSF50193">
    <property type="entry name" value="Ribosomal protein L14"/>
    <property type="match status" value="1"/>
</dbReference>
<dbReference type="PROSITE" id="PS00049">
    <property type="entry name" value="RIBOSOMAL_L14"/>
    <property type="match status" value="1"/>
</dbReference>